<evidence type="ECO:0000250" key="1">
    <source>
        <dbReference type="UniProtKB" id="P49773"/>
    </source>
</evidence>
<evidence type="ECO:0000250" key="2">
    <source>
        <dbReference type="UniProtKB" id="Q04344"/>
    </source>
</evidence>
<evidence type="ECO:0000255" key="3">
    <source>
        <dbReference type="PROSITE-ProRule" id="PRU00464"/>
    </source>
</evidence>
<evidence type="ECO:0000269" key="4">
    <source>
    </source>
</evidence>
<evidence type="ECO:0000269" key="5">
    <source>
    </source>
</evidence>
<evidence type="ECO:0000269" key="6">
    <source>
    </source>
</evidence>
<evidence type="ECO:0000303" key="7">
    <source>
    </source>
</evidence>
<evidence type="ECO:0000303" key="8">
    <source>
    </source>
</evidence>
<evidence type="ECO:0000305" key="9"/>
<evidence type="ECO:0000305" key="10">
    <source>
    </source>
</evidence>
<evidence type="ECO:0007829" key="11">
    <source>
        <dbReference type="PDB" id="6IQ1"/>
    </source>
</evidence>
<reference key="1">
    <citation type="journal article" date="2004" name="Proc. Natl. Acad. Sci. U.S.A.">
        <title>The diploid genome sequence of Candida albicans.</title>
        <authorList>
            <person name="Jones T."/>
            <person name="Federspiel N.A."/>
            <person name="Chibana H."/>
            <person name="Dungan J."/>
            <person name="Kalman S."/>
            <person name="Magee B.B."/>
            <person name="Newport G."/>
            <person name="Thorstenson Y.R."/>
            <person name="Agabian N."/>
            <person name="Magee P.T."/>
            <person name="Davis R.W."/>
            <person name="Scherer S."/>
        </authorList>
    </citation>
    <scope>NUCLEOTIDE SEQUENCE [LARGE SCALE GENOMIC DNA]</scope>
    <source>
        <strain>SC5314 / ATCC MYA-2876</strain>
    </source>
</reference>
<reference key="2">
    <citation type="journal article" date="2007" name="Genome Biol.">
        <title>Assembly of the Candida albicans genome into sixteen supercontigs aligned on the eight chromosomes.</title>
        <authorList>
            <person name="van het Hoog M."/>
            <person name="Rast T.J."/>
            <person name="Martchenko M."/>
            <person name="Grindle S."/>
            <person name="Dignard D."/>
            <person name="Hogues H."/>
            <person name="Cuomo C."/>
            <person name="Berriman M."/>
            <person name="Scherer S."/>
            <person name="Magee B.B."/>
            <person name="Whiteway M."/>
            <person name="Chibana H."/>
            <person name="Nantel A."/>
            <person name="Magee P.T."/>
        </authorList>
    </citation>
    <scope>GENOME REANNOTATION</scope>
    <source>
        <strain>SC5314 / ATCC MYA-2876</strain>
    </source>
</reference>
<reference key="3">
    <citation type="journal article" date="2013" name="Genome Biol.">
        <title>Assembly of a phased diploid Candida albicans genome facilitates allele-specific measurements and provides a simple model for repeat and indel structure.</title>
        <authorList>
            <person name="Muzzey D."/>
            <person name="Schwartz K."/>
            <person name="Weissman J.S."/>
            <person name="Sherlock G."/>
        </authorList>
    </citation>
    <scope>NUCLEOTIDE SEQUENCE [LARGE SCALE GENOMIC DNA]</scope>
    <scope>GENOME REANNOTATION</scope>
    <source>
        <strain>SC5314 / ATCC MYA-2876</strain>
    </source>
</reference>
<reference key="4">
    <citation type="journal article" date="2008" name="Int. J. Med. Microbiol.">
        <title>A proteomic view of Candida albicans yeast cell metabolism in exponential and stationary growth phases.</title>
        <authorList>
            <person name="Kusch H."/>
            <person name="Engelmann S."/>
            <person name="Bode R."/>
            <person name="Albrecht D."/>
            <person name="Morschhauser J."/>
            <person name="Hecker M."/>
        </authorList>
    </citation>
    <scope>IDENTIFICATION</scope>
    <scope>INDUCTION</scope>
</reference>
<reference key="5">
    <citation type="journal article" date="2013" name="Mol. Oral. Microbiol.">
        <title>Pseudomonas aeruginosa lipopolysaccharide inhibits Candida albicans hyphae formation and alters gene expression during biofilm development.</title>
        <authorList>
            <person name="Bandara H.M."/>
            <person name="Cheung B.P.K."/>
            <person name="Watt R.M."/>
            <person name="Jin L.J."/>
            <person name="Samaranayake L.P."/>
        </authorList>
    </citation>
    <scope>INDUCTION</scope>
</reference>
<reference key="6">
    <citation type="journal article" date="2019" name="Mol. Cells">
        <title>Crystal Structure of histidine triad nucleotide-binding protein from the pathogenic fungus Candida albicans.</title>
        <authorList>
            <person name="Jung A."/>
            <person name="Yun J.S."/>
            <person name="Kim S."/>
            <person name="Kim S.R."/>
            <person name="Shin M."/>
            <person name="Cho D.H."/>
            <person name="Choi K.S."/>
            <person name="Chang J.H."/>
        </authorList>
    </citation>
    <scope>X-RAY CRYSTALLOGRAPHY (2.48 ANGSTROMS)</scope>
    <scope>SUBUNIT</scope>
</reference>
<gene>
    <name evidence="8" type="primary">HNT1</name>
    <name type="ordered locus">orf19.2341</name>
    <name type="ORF">CAALFM_C110780CA</name>
</gene>
<name>HNT1_CANAL</name>
<keyword id="KW-0002">3D-structure</keyword>
<keyword id="KW-0378">Hydrolase</keyword>
<keyword id="KW-0460">Magnesium</keyword>
<keyword id="KW-0547">Nucleotide-binding</keyword>
<keyword id="KW-1185">Reference proteome</keyword>
<accession>Q59WG0</accession>
<sequence length="152" mass="16986">MASHASCIFCKIIKGEIPSFKLIETAKTYSFLDIQPIAEAHVLIIPKHHGAKLHNIPDDYLSDILPVVKKLTKVLKLDENNTPEGEGYNVLQNNGRIAHQVVDHVHFHLIPKKDEATGLGVGWPAEATDFDKLGKLHEKLKEELAKVDNEKL</sequence>
<protein>
    <recommendedName>
        <fullName evidence="7">Adenosine 5'-monophosphoramidase HNT1</fullName>
        <ecNumber evidence="10">3.-.-.-</ecNumber>
    </recommendedName>
    <alternativeName>
        <fullName evidence="8">Histidine triad nucleotide-binding protein HNT1</fullName>
        <shortName evidence="8">HINT</shortName>
    </alternativeName>
</protein>
<organism>
    <name type="scientific">Candida albicans (strain SC5314 / ATCC MYA-2876)</name>
    <name type="common">Yeast</name>
    <dbReference type="NCBI Taxonomy" id="237561"/>
    <lineage>
        <taxon>Eukaryota</taxon>
        <taxon>Fungi</taxon>
        <taxon>Dikarya</taxon>
        <taxon>Ascomycota</taxon>
        <taxon>Saccharomycotina</taxon>
        <taxon>Pichiomycetes</taxon>
        <taxon>Debaryomycetaceae</taxon>
        <taxon>Candida/Lodderomyces clade</taxon>
        <taxon>Candida</taxon>
    </lineage>
</organism>
<comment type="function">
    <text evidence="1">Hydrolyzes adenosine 5'-monophosphoramidate substrates such as AMP-morpholidate, AMP-N-alanine methyl ester, AMP-alpha-acetyl lysine methyl ester and AMP-NH2.</text>
</comment>
<comment type="catalytic activity">
    <reaction evidence="1">
        <text>adenosine 5'-phosphoramidate + H2O = AMP + NH4(+)</text>
        <dbReference type="Rhea" id="RHEA:67916"/>
        <dbReference type="ChEBI" id="CHEBI:15377"/>
        <dbReference type="ChEBI" id="CHEBI:28938"/>
        <dbReference type="ChEBI" id="CHEBI:57890"/>
        <dbReference type="ChEBI" id="CHEBI:456215"/>
    </reaction>
    <physiologicalReaction direction="left-to-right" evidence="1">
        <dbReference type="Rhea" id="RHEA:67917"/>
    </physiologicalReaction>
</comment>
<comment type="cofactor">
    <cofactor evidence="2">
        <name>Mg(2+)</name>
        <dbReference type="ChEBI" id="CHEBI:18420"/>
    </cofactor>
</comment>
<comment type="subunit">
    <text evidence="6">Homodimer.</text>
</comment>
<comment type="induction">
    <text evidence="4 5">Expression is decreased at the stationary phase (PubMed:17588813). Expression in suppressed in the presence of Pseudomonas aeruginosa lipopolysaccharide (LPS) (PubMed:23194472).</text>
</comment>
<comment type="similarity">
    <text evidence="9">Belongs to the HINT family.</text>
</comment>
<dbReference type="EC" id="3.-.-.-" evidence="10"/>
<dbReference type="EMBL" id="CP017623">
    <property type="protein sequence ID" value="AOW26705.1"/>
    <property type="molecule type" value="Genomic_DNA"/>
</dbReference>
<dbReference type="RefSeq" id="XP_713946.1">
    <property type="nucleotide sequence ID" value="XM_708853.1"/>
</dbReference>
<dbReference type="PDB" id="6IQ1">
    <property type="method" value="X-ray"/>
    <property type="resolution" value="2.48 A"/>
    <property type="chains" value="A/B/C/D=1-152"/>
</dbReference>
<dbReference type="PDBsum" id="6IQ1"/>
<dbReference type="SMR" id="Q59WG0"/>
<dbReference type="FunCoup" id="Q59WG0">
    <property type="interactions" value="636"/>
</dbReference>
<dbReference type="STRING" id="237561.Q59WG0"/>
<dbReference type="EnsemblFungi" id="C1_10780C_A-T">
    <property type="protein sequence ID" value="C1_10780C_A-T-p1"/>
    <property type="gene ID" value="C1_10780C_A"/>
</dbReference>
<dbReference type="GeneID" id="3644441"/>
<dbReference type="KEGG" id="cal:CAALFM_C110780CA"/>
<dbReference type="CGD" id="CAL0000178567">
    <property type="gene designation" value="HNT1"/>
</dbReference>
<dbReference type="VEuPathDB" id="FungiDB:C1_10780C_A"/>
<dbReference type="eggNOG" id="KOG3275">
    <property type="taxonomic scope" value="Eukaryota"/>
</dbReference>
<dbReference type="HOGENOM" id="CLU_056776_3_0_1"/>
<dbReference type="InParanoid" id="Q59WG0"/>
<dbReference type="OMA" id="YRVVMNC"/>
<dbReference type="OrthoDB" id="672793at2759"/>
<dbReference type="Proteomes" id="UP000000559">
    <property type="component" value="Chromosome 1"/>
</dbReference>
<dbReference type="GO" id="GO:0016787">
    <property type="term" value="F:hydrolase activity"/>
    <property type="evidence" value="ECO:0007669"/>
    <property type="project" value="UniProtKB-KW"/>
</dbReference>
<dbReference type="GO" id="GO:0000166">
    <property type="term" value="F:nucleotide binding"/>
    <property type="evidence" value="ECO:0007669"/>
    <property type="project" value="UniProtKB-KW"/>
</dbReference>
<dbReference type="GO" id="GO:0009117">
    <property type="term" value="P:nucleotide metabolic process"/>
    <property type="evidence" value="ECO:0000318"/>
    <property type="project" value="GO_Central"/>
</dbReference>
<dbReference type="CDD" id="cd01277">
    <property type="entry name" value="HINT_subgroup"/>
    <property type="match status" value="1"/>
</dbReference>
<dbReference type="FunFam" id="3.30.428.10:FF:000013">
    <property type="entry name" value="Hit family protein 1"/>
    <property type="match status" value="1"/>
</dbReference>
<dbReference type="Gene3D" id="3.30.428.10">
    <property type="entry name" value="HIT-like"/>
    <property type="match status" value="1"/>
</dbReference>
<dbReference type="InterPro" id="IPR039384">
    <property type="entry name" value="HINT"/>
</dbReference>
<dbReference type="InterPro" id="IPR019808">
    <property type="entry name" value="Histidine_triad_CS"/>
</dbReference>
<dbReference type="InterPro" id="IPR001310">
    <property type="entry name" value="Histidine_triad_HIT"/>
</dbReference>
<dbReference type="InterPro" id="IPR011146">
    <property type="entry name" value="HIT-like"/>
</dbReference>
<dbReference type="InterPro" id="IPR036265">
    <property type="entry name" value="HIT-like_sf"/>
</dbReference>
<dbReference type="PANTHER" id="PTHR46648:SF1">
    <property type="entry name" value="ADENOSINE 5'-MONOPHOSPHORAMIDASE HNT1"/>
    <property type="match status" value="1"/>
</dbReference>
<dbReference type="PANTHER" id="PTHR46648">
    <property type="entry name" value="HIT FAMILY PROTEIN 1"/>
    <property type="match status" value="1"/>
</dbReference>
<dbReference type="Pfam" id="PF01230">
    <property type="entry name" value="HIT"/>
    <property type="match status" value="1"/>
</dbReference>
<dbReference type="PRINTS" id="PR00332">
    <property type="entry name" value="HISTRIAD"/>
</dbReference>
<dbReference type="SUPFAM" id="SSF54197">
    <property type="entry name" value="HIT-like"/>
    <property type="match status" value="1"/>
</dbReference>
<dbReference type="PROSITE" id="PS00892">
    <property type="entry name" value="HIT_1"/>
    <property type="match status" value="1"/>
</dbReference>
<dbReference type="PROSITE" id="PS51084">
    <property type="entry name" value="HIT_2"/>
    <property type="match status" value="1"/>
</dbReference>
<feature type="chain" id="PRO_0000453884" description="Adenosine 5'-monophosphoramidase HNT1">
    <location>
        <begin position="1"/>
        <end position="152"/>
    </location>
</feature>
<feature type="domain" description="HIT" evidence="3">
    <location>
        <begin position="8"/>
        <end position="119"/>
    </location>
</feature>
<feature type="short sequence motif" description="Histidine triad motif" evidence="3">
    <location>
        <begin position="104"/>
        <end position="108"/>
    </location>
</feature>
<feature type="active site" description="Tele-AMP-histidine intermediate" evidence="1">
    <location>
        <position position="106"/>
    </location>
</feature>
<feature type="binding site" evidence="1">
    <location>
        <begin position="33"/>
        <end position="34"/>
    </location>
    <ligand>
        <name>AMP</name>
        <dbReference type="ChEBI" id="CHEBI:456215"/>
    </ligand>
</feature>
<feature type="binding site" evidence="1">
    <location>
        <position position="93"/>
    </location>
    <ligand>
        <name>AMP</name>
        <dbReference type="ChEBI" id="CHEBI:456215"/>
    </ligand>
</feature>
<feature type="binding site" evidence="1">
    <location>
        <begin position="99"/>
        <end position="101"/>
    </location>
    <ligand>
        <name>AMP</name>
        <dbReference type="ChEBI" id="CHEBI:456215"/>
    </ligand>
</feature>
<feature type="binding site" evidence="1">
    <location>
        <begin position="106"/>
        <end position="108"/>
    </location>
    <ligand>
        <name>AMP</name>
        <dbReference type="ChEBI" id="CHEBI:456215"/>
    </ligand>
</feature>
<feature type="helix" evidence="11">
    <location>
        <begin position="8"/>
        <end position="13"/>
    </location>
</feature>
<feature type="strand" evidence="11">
    <location>
        <begin position="21"/>
        <end position="24"/>
    </location>
</feature>
<feature type="strand" evidence="11">
    <location>
        <begin position="26"/>
        <end position="32"/>
    </location>
</feature>
<feature type="strand" evidence="11">
    <location>
        <begin position="42"/>
        <end position="48"/>
    </location>
</feature>
<feature type="helix" evidence="11">
    <location>
        <begin position="53"/>
        <end position="55"/>
    </location>
</feature>
<feature type="helix" evidence="11">
    <location>
        <begin position="58"/>
        <end position="74"/>
    </location>
</feature>
<feature type="helix" evidence="11">
    <location>
        <begin position="77"/>
        <end position="79"/>
    </location>
</feature>
<feature type="strand" evidence="11">
    <location>
        <begin position="82"/>
        <end position="85"/>
    </location>
</feature>
<feature type="strand" evidence="11">
    <location>
        <begin position="87"/>
        <end position="95"/>
    </location>
</feature>
<feature type="turn" evidence="11">
    <location>
        <begin position="96"/>
        <end position="99"/>
    </location>
</feature>
<feature type="strand" evidence="11">
    <location>
        <begin position="102"/>
        <end position="104"/>
    </location>
</feature>
<feature type="strand" evidence="11">
    <location>
        <begin position="107"/>
        <end position="112"/>
    </location>
</feature>
<feature type="strand" evidence="11">
    <location>
        <begin position="114"/>
        <end position="118"/>
    </location>
</feature>
<feature type="strand" evidence="11">
    <location>
        <begin position="120"/>
        <end position="122"/>
    </location>
</feature>
<feature type="helix" evidence="11">
    <location>
        <begin position="130"/>
        <end position="147"/>
    </location>
</feature>
<proteinExistence type="evidence at protein level"/>